<keyword id="KW-0456">Lyase</keyword>
<keyword id="KW-0460">Magnesium</keyword>
<keyword id="KW-0464">Manganese</keyword>
<keyword id="KW-0479">Metal-binding</keyword>
<keyword id="KW-1185">Reference proteome</keyword>
<keyword id="KW-0686">Riboflavin biosynthesis</keyword>
<feature type="chain" id="PRO_1000193756" description="3,4-dihydroxy-2-butanone 4-phosphate synthase">
    <location>
        <begin position="1"/>
        <end position="217"/>
    </location>
</feature>
<feature type="binding site" evidence="1">
    <location>
        <begin position="37"/>
        <end position="38"/>
    </location>
    <ligand>
        <name>D-ribulose 5-phosphate</name>
        <dbReference type="ChEBI" id="CHEBI:58121"/>
    </ligand>
</feature>
<feature type="binding site" evidence="1">
    <location>
        <position position="38"/>
    </location>
    <ligand>
        <name>Mg(2+)</name>
        <dbReference type="ChEBI" id="CHEBI:18420"/>
        <label>1</label>
    </ligand>
</feature>
<feature type="binding site" evidence="1">
    <location>
        <position position="38"/>
    </location>
    <ligand>
        <name>Mg(2+)</name>
        <dbReference type="ChEBI" id="CHEBI:18420"/>
        <label>2</label>
    </ligand>
</feature>
<feature type="binding site" evidence="1">
    <location>
        <position position="42"/>
    </location>
    <ligand>
        <name>D-ribulose 5-phosphate</name>
        <dbReference type="ChEBI" id="CHEBI:58121"/>
    </ligand>
</feature>
<feature type="binding site" evidence="1">
    <location>
        <begin position="150"/>
        <end position="154"/>
    </location>
    <ligand>
        <name>D-ribulose 5-phosphate</name>
        <dbReference type="ChEBI" id="CHEBI:58121"/>
    </ligand>
</feature>
<feature type="binding site" evidence="1">
    <location>
        <position position="153"/>
    </location>
    <ligand>
        <name>Mg(2+)</name>
        <dbReference type="ChEBI" id="CHEBI:18420"/>
        <label>2</label>
    </ligand>
</feature>
<feature type="binding site" evidence="1">
    <location>
        <position position="174"/>
    </location>
    <ligand>
        <name>D-ribulose 5-phosphate</name>
        <dbReference type="ChEBI" id="CHEBI:58121"/>
    </ligand>
</feature>
<feature type="site" description="Essential for catalytic activity" evidence="1">
    <location>
        <position position="136"/>
    </location>
</feature>
<feature type="site" description="Essential for catalytic activity" evidence="1">
    <location>
        <position position="174"/>
    </location>
</feature>
<protein>
    <recommendedName>
        <fullName evidence="1">3,4-dihydroxy-2-butanone 4-phosphate synthase</fullName>
        <shortName evidence="1">DHBP synthase</shortName>
        <ecNumber evidence="1">4.1.99.12</ecNumber>
    </recommendedName>
</protein>
<reference key="1">
    <citation type="journal article" date="2009" name="J. Bacteriol.">
        <title>Complete genome sequence and comparative genome analysis of enteropathogenic Escherichia coli O127:H6 strain E2348/69.</title>
        <authorList>
            <person name="Iguchi A."/>
            <person name="Thomson N.R."/>
            <person name="Ogura Y."/>
            <person name="Saunders D."/>
            <person name="Ooka T."/>
            <person name="Henderson I.R."/>
            <person name="Harris D."/>
            <person name="Asadulghani M."/>
            <person name="Kurokawa K."/>
            <person name="Dean P."/>
            <person name="Kenny B."/>
            <person name="Quail M.A."/>
            <person name="Thurston S."/>
            <person name="Dougan G."/>
            <person name="Hayashi T."/>
            <person name="Parkhill J."/>
            <person name="Frankel G."/>
        </authorList>
    </citation>
    <scope>NUCLEOTIDE SEQUENCE [LARGE SCALE GENOMIC DNA]</scope>
    <source>
        <strain>E2348/69 / EPEC</strain>
    </source>
</reference>
<comment type="function">
    <text evidence="1">Catalyzes the conversion of D-ribulose 5-phosphate to formate and 3,4-dihydroxy-2-butanone 4-phosphate.</text>
</comment>
<comment type="catalytic activity">
    <reaction evidence="1">
        <text>D-ribulose 5-phosphate = (2S)-2-hydroxy-3-oxobutyl phosphate + formate + H(+)</text>
        <dbReference type="Rhea" id="RHEA:18457"/>
        <dbReference type="ChEBI" id="CHEBI:15378"/>
        <dbReference type="ChEBI" id="CHEBI:15740"/>
        <dbReference type="ChEBI" id="CHEBI:58121"/>
        <dbReference type="ChEBI" id="CHEBI:58830"/>
        <dbReference type="EC" id="4.1.99.12"/>
    </reaction>
</comment>
<comment type="cofactor">
    <cofactor evidence="1">
        <name>Mg(2+)</name>
        <dbReference type="ChEBI" id="CHEBI:18420"/>
    </cofactor>
    <cofactor evidence="1">
        <name>Mn(2+)</name>
        <dbReference type="ChEBI" id="CHEBI:29035"/>
    </cofactor>
    <text evidence="1">Binds 2 divalent metal cations per subunit. Magnesium or manganese.</text>
</comment>
<comment type="pathway">
    <text evidence="1">Cofactor biosynthesis; riboflavin biosynthesis; 2-hydroxy-3-oxobutyl phosphate from D-ribulose 5-phosphate: step 1/1.</text>
</comment>
<comment type="subunit">
    <text evidence="1">Homodimer.</text>
</comment>
<comment type="similarity">
    <text evidence="1">Belongs to the DHBP synthase family.</text>
</comment>
<dbReference type="EC" id="4.1.99.12" evidence="1"/>
<dbReference type="EMBL" id="FM180568">
    <property type="protein sequence ID" value="CAS10888.1"/>
    <property type="molecule type" value="Genomic_DNA"/>
</dbReference>
<dbReference type="RefSeq" id="WP_001076989.1">
    <property type="nucleotide sequence ID" value="NC_011601.1"/>
</dbReference>
<dbReference type="SMR" id="B7UIV5"/>
<dbReference type="KEGG" id="ecg:E2348C_3340"/>
<dbReference type="HOGENOM" id="CLU_020273_3_0_6"/>
<dbReference type="UniPathway" id="UPA00275">
    <property type="reaction ID" value="UER00399"/>
</dbReference>
<dbReference type="Proteomes" id="UP000008205">
    <property type="component" value="Chromosome"/>
</dbReference>
<dbReference type="GO" id="GO:0005829">
    <property type="term" value="C:cytosol"/>
    <property type="evidence" value="ECO:0007669"/>
    <property type="project" value="TreeGrafter"/>
</dbReference>
<dbReference type="GO" id="GO:0008686">
    <property type="term" value="F:3,4-dihydroxy-2-butanone-4-phosphate synthase activity"/>
    <property type="evidence" value="ECO:0007669"/>
    <property type="project" value="UniProtKB-UniRule"/>
</dbReference>
<dbReference type="GO" id="GO:0000287">
    <property type="term" value="F:magnesium ion binding"/>
    <property type="evidence" value="ECO:0007669"/>
    <property type="project" value="UniProtKB-UniRule"/>
</dbReference>
<dbReference type="GO" id="GO:0030145">
    <property type="term" value="F:manganese ion binding"/>
    <property type="evidence" value="ECO:0007669"/>
    <property type="project" value="UniProtKB-UniRule"/>
</dbReference>
<dbReference type="GO" id="GO:0009231">
    <property type="term" value="P:riboflavin biosynthetic process"/>
    <property type="evidence" value="ECO:0007669"/>
    <property type="project" value="UniProtKB-UniRule"/>
</dbReference>
<dbReference type="FunFam" id="3.90.870.10:FF:000002">
    <property type="entry name" value="3,4-dihydroxy-2-butanone 4-phosphate synthase"/>
    <property type="match status" value="1"/>
</dbReference>
<dbReference type="Gene3D" id="3.90.870.10">
    <property type="entry name" value="DHBP synthase"/>
    <property type="match status" value="1"/>
</dbReference>
<dbReference type="HAMAP" id="MF_00180">
    <property type="entry name" value="RibB"/>
    <property type="match status" value="1"/>
</dbReference>
<dbReference type="InterPro" id="IPR017945">
    <property type="entry name" value="DHBP_synth_RibB-like_a/b_dom"/>
</dbReference>
<dbReference type="InterPro" id="IPR000422">
    <property type="entry name" value="DHBP_synthase_RibB"/>
</dbReference>
<dbReference type="NCBIfam" id="TIGR00506">
    <property type="entry name" value="ribB"/>
    <property type="match status" value="1"/>
</dbReference>
<dbReference type="PANTHER" id="PTHR21327:SF38">
    <property type="entry name" value="3,4-DIHYDROXY-2-BUTANONE 4-PHOSPHATE SYNTHASE"/>
    <property type="match status" value="1"/>
</dbReference>
<dbReference type="PANTHER" id="PTHR21327">
    <property type="entry name" value="GTP CYCLOHYDROLASE II-RELATED"/>
    <property type="match status" value="1"/>
</dbReference>
<dbReference type="Pfam" id="PF00926">
    <property type="entry name" value="DHBP_synthase"/>
    <property type="match status" value="1"/>
</dbReference>
<dbReference type="SUPFAM" id="SSF55821">
    <property type="entry name" value="YrdC/RibB"/>
    <property type="match status" value="1"/>
</dbReference>
<proteinExistence type="inferred from homology"/>
<organism>
    <name type="scientific">Escherichia coli O127:H6 (strain E2348/69 / EPEC)</name>
    <dbReference type="NCBI Taxonomy" id="574521"/>
    <lineage>
        <taxon>Bacteria</taxon>
        <taxon>Pseudomonadati</taxon>
        <taxon>Pseudomonadota</taxon>
        <taxon>Gammaproteobacteria</taxon>
        <taxon>Enterobacterales</taxon>
        <taxon>Enterobacteriaceae</taxon>
        <taxon>Escherichia</taxon>
    </lineage>
</organism>
<accession>B7UIV5</accession>
<evidence type="ECO:0000255" key="1">
    <source>
        <dbReference type="HAMAP-Rule" id="MF_00180"/>
    </source>
</evidence>
<sequence length="217" mass="23339">MNQTLLSSFGTPFERVENALAALREGRGVMVLDDEDRENEGDMIFPAETMTVEQMALTIRHGSGIVCLCITDDRRKQLDLPMMVENNTSAYGTGFTVTIEAAEGVTTGVSAADRITTVRAAIADGAKPSDLNRPGHVFPLRAQAGGVLTRGGHTEATIDLMTLAGFKPAGVLCELTNDDGTMARAPECIEFANKHNMALVTIEDLVAYRQAHERKAS</sequence>
<gene>
    <name evidence="1" type="primary">ribB</name>
    <name type="ordered locus">E2348C_3340</name>
</gene>
<name>RIBB_ECO27</name>